<gene>
    <name type="primary">ACCS</name>
</gene>
<proteinExistence type="evidence at transcript level"/>
<dbReference type="EMBL" id="BT020948">
    <property type="protein sequence ID" value="AAX08965.1"/>
    <property type="molecule type" value="mRNA"/>
</dbReference>
<dbReference type="RefSeq" id="NP_001015526.1">
    <property type="nucleotide sequence ID" value="NM_001015526.1"/>
</dbReference>
<dbReference type="SMR" id="Q5E9H2"/>
<dbReference type="FunCoup" id="Q5E9H2">
    <property type="interactions" value="121"/>
</dbReference>
<dbReference type="STRING" id="9913.ENSBTAP00000041743"/>
<dbReference type="GeneID" id="505649"/>
<dbReference type="KEGG" id="bta:505649"/>
<dbReference type="CTD" id="84680"/>
<dbReference type="InParanoid" id="Q5E9H2"/>
<dbReference type="OrthoDB" id="7042322at2759"/>
<dbReference type="Proteomes" id="UP000009136">
    <property type="component" value="Unplaced"/>
</dbReference>
<dbReference type="GO" id="GO:0030170">
    <property type="term" value="F:pyridoxal phosphate binding"/>
    <property type="evidence" value="ECO:0007669"/>
    <property type="project" value="InterPro"/>
</dbReference>
<dbReference type="GO" id="GO:0008483">
    <property type="term" value="F:transaminase activity"/>
    <property type="evidence" value="ECO:0000318"/>
    <property type="project" value="GO_Central"/>
</dbReference>
<dbReference type="GO" id="GO:0006520">
    <property type="term" value="P:amino acid metabolic process"/>
    <property type="evidence" value="ECO:0000318"/>
    <property type="project" value="GO_Central"/>
</dbReference>
<dbReference type="GO" id="GO:0009058">
    <property type="term" value="P:biosynthetic process"/>
    <property type="evidence" value="ECO:0007669"/>
    <property type="project" value="InterPro"/>
</dbReference>
<dbReference type="CDD" id="cd00609">
    <property type="entry name" value="AAT_like"/>
    <property type="match status" value="1"/>
</dbReference>
<dbReference type="Gene3D" id="3.90.1150.10">
    <property type="entry name" value="Aspartate Aminotransferase, domain 1"/>
    <property type="match status" value="1"/>
</dbReference>
<dbReference type="Gene3D" id="3.40.640.10">
    <property type="entry name" value="Type I PLP-dependent aspartate aminotransferase-like (Major domain)"/>
    <property type="match status" value="1"/>
</dbReference>
<dbReference type="InterPro" id="IPR004839">
    <property type="entry name" value="Aminotransferase_I/II_large"/>
</dbReference>
<dbReference type="InterPro" id="IPR050478">
    <property type="entry name" value="Ethylene_sulfur-biosynth"/>
</dbReference>
<dbReference type="InterPro" id="IPR015424">
    <property type="entry name" value="PyrdxlP-dep_Trfase"/>
</dbReference>
<dbReference type="InterPro" id="IPR015421">
    <property type="entry name" value="PyrdxlP-dep_Trfase_major"/>
</dbReference>
<dbReference type="InterPro" id="IPR015422">
    <property type="entry name" value="PyrdxlP-dep_Trfase_small"/>
</dbReference>
<dbReference type="PANTHER" id="PTHR43795:SF17">
    <property type="entry name" value="1-AMINOCYCLOPROPANE-1-CARBOXYLATE SYNTHASE-LIKE PROTEIN 1"/>
    <property type="match status" value="1"/>
</dbReference>
<dbReference type="PANTHER" id="PTHR43795">
    <property type="entry name" value="BIFUNCTIONAL ASPARTATE AMINOTRANSFERASE AND GLUTAMATE/ASPARTATE-PREPHENATE AMINOTRANSFERASE-RELATED"/>
    <property type="match status" value="1"/>
</dbReference>
<dbReference type="Pfam" id="PF00155">
    <property type="entry name" value="Aminotran_1_2"/>
    <property type="match status" value="1"/>
</dbReference>
<dbReference type="PRINTS" id="PR00753">
    <property type="entry name" value="ACCSYNTHASE"/>
</dbReference>
<dbReference type="SUPFAM" id="SSF53383">
    <property type="entry name" value="PLP-dependent transferases"/>
    <property type="match status" value="1"/>
</dbReference>
<comment type="function">
    <text evidence="2">Does not catalyze the synthesis of 1-aminocyclopropane-1-carboxylate but is capable of catalyzing the deamination of L-vinylglycine.</text>
</comment>
<comment type="similarity">
    <text evidence="3">Belongs to the class-I pyridoxal-phosphate-dependent aminotransferase family.</text>
</comment>
<comment type="caution">
    <text evidence="2">Similar to plant 1-aminocyclopropane-1-carboxylate synthases but lacks a number of residues which are necessary for activity.</text>
</comment>
<reference evidence="5" key="1">
    <citation type="journal article" date="2005" name="BMC Genomics">
        <title>Characterization of 954 bovine full-CDS cDNA sequences.</title>
        <authorList>
            <person name="Harhay G.P."/>
            <person name="Sonstegard T.S."/>
            <person name="Keele J.W."/>
            <person name="Heaton M.P."/>
            <person name="Clawson M.L."/>
            <person name="Snelling W.M."/>
            <person name="Wiedmann R.T."/>
            <person name="Van Tassell C.P."/>
            <person name="Smith T.P.L."/>
        </authorList>
    </citation>
    <scope>NUCLEOTIDE SEQUENCE [LARGE SCALE MRNA]</scope>
</reference>
<keyword id="KW-0663">Pyridoxal phosphate</keyword>
<keyword id="KW-1185">Reference proteome</keyword>
<protein>
    <recommendedName>
        <fullName>1-aminocyclopropane-1-carboxylate synthase-like protein 1</fullName>
        <shortName>ACC synthase-like protein 1</shortName>
    </recommendedName>
</protein>
<sequence length="502" mass="57066">MFTLPQKEFRMTTACPGSDSIQDLPSNKGDGLERECSRKPDQKLLKFYGVGDPAAELSSSSPYLSSRGSVIKWFWDSAEEGYRTYHMDEYDEDKNPSGIINLGTSENKLCFDLLSRRLSQSDMLQVEPALLQYPDWRGHLFLREEVARFLSFYCRSPAPLKPENVVVLNGCASLFSALATVLCEAGEAFLIPAPYYGAITQHVYLYGNVRLVCVYLDSEVTGLETRPFQLTVEKLEMALQGANSEGVKVKGLILINPQNPLGDIYSPGELQEYLEFAKRHELHVMVDEVYMLSVFEESAGYRSVLSLERLPDPQRTHVMWATSKDFGMSGLRFGTLYTENWAVATAVASLCRYHGLSGLVQYQMAQLLRDHDWINQVYLPENHARLKAAHTYVSEDLRALGIPFVSRGAGFFIWVDLRKYLPEATFEEEVLLWRRFLENKVLLSFGKAFECKEPGWFRLVFSDKTHRLHLGMQRVRQVLEGQPQLADGAPPHQIQEPQGPHR</sequence>
<evidence type="ECO:0000250" key="1"/>
<evidence type="ECO:0000250" key="2">
    <source>
        <dbReference type="UniProtKB" id="Q96QU6"/>
    </source>
</evidence>
<evidence type="ECO:0000255" key="3"/>
<evidence type="ECO:0000256" key="4">
    <source>
        <dbReference type="SAM" id="MobiDB-lite"/>
    </source>
</evidence>
<evidence type="ECO:0000312" key="5">
    <source>
        <dbReference type="EMBL" id="AAX08965.1"/>
    </source>
</evidence>
<name>1A1L1_BOVIN</name>
<organism>
    <name type="scientific">Bos taurus</name>
    <name type="common">Bovine</name>
    <dbReference type="NCBI Taxonomy" id="9913"/>
    <lineage>
        <taxon>Eukaryota</taxon>
        <taxon>Metazoa</taxon>
        <taxon>Chordata</taxon>
        <taxon>Craniata</taxon>
        <taxon>Vertebrata</taxon>
        <taxon>Euteleostomi</taxon>
        <taxon>Mammalia</taxon>
        <taxon>Eutheria</taxon>
        <taxon>Laurasiatheria</taxon>
        <taxon>Artiodactyla</taxon>
        <taxon>Ruminantia</taxon>
        <taxon>Pecora</taxon>
        <taxon>Bovidae</taxon>
        <taxon>Bovinae</taxon>
        <taxon>Bos</taxon>
    </lineage>
</organism>
<feature type="chain" id="PRO_0000318070" description="1-aminocyclopropane-1-carboxylate synthase-like protein 1">
    <location>
        <begin position="1"/>
        <end position="502"/>
    </location>
</feature>
<feature type="region of interest" description="Disordered" evidence="4">
    <location>
        <begin position="15"/>
        <end position="35"/>
    </location>
</feature>
<feature type="binding site" evidence="1">
    <location>
        <position position="106"/>
    </location>
    <ligand>
        <name>substrate</name>
    </ligand>
</feature>
<feature type="modified residue" description="N6-(pyridoxal phosphate)lysine" evidence="1">
    <location>
        <position position="324"/>
    </location>
</feature>
<accession>Q5E9H2</accession>